<reference key="1">
    <citation type="journal article" date="2005" name="Nature">
        <title>The genome sequence of the rice blast fungus Magnaporthe grisea.</title>
        <authorList>
            <person name="Dean R.A."/>
            <person name="Talbot N.J."/>
            <person name="Ebbole D.J."/>
            <person name="Farman M.L."/>
            <person name="Mitchell T.K."/>
            <person name="Orbach M.J."/>
            <person name="Thon M.R."/>
            <person name="Kulkarni R."/>
            <person name="Xu J.-R."/>
            <person name="Pan H."/>
            <person name="Read N.D."/>
            <person name="Lee Y.-H."/>
            <person name="Carbone I."/>
            <person name="Brown D."/>
            <person name="Oh Y.Y."/>
            <person name="Donofrio N."/>
            <person name="Jeong J.S."/>
            <person name="Soanes D.M."/>
            <person name="Djonovic S."/>
            <person name="Kolomiets E."/>
            <person name="Rehmeyer C."/>
            <person name="Li W."/>
            <person name="Harding M."/>
            <person name="Kim S."/>
            <person name="Lebrun M.-H."/>
            <person name="Bohnert H."/>
            <person name="Coughlan S."/>
            <person name="Butler J."/>
            <person name="Calvo S.E."/>
            <person name="Ma L.-J."/>
            <person name="Nicol R."/>
            <person name="Purcell S."/>
            <person name="Nusbaum C."/>
            <person name="Galagan J.E."/>
            <person name="Birren B.W."/>
        </authorList>
    </citation>
    <scope>NUCLEOTIDE SEQUENCE [LARGE SCALE GENOMIC DNA]</scope>
    <source>
        <strain>70-15 / ATCC MYA-4617 / FGSC 8958</strain>
    </source>
</reference>
<protein>
    <recommendedName>
        <fullName evidence="1">Mitochondrial distribution and morphology protein 12</fullName>
    </recommendedName>
    <alternativeName>
        <fullName evidence="1">Mitochondrial inheritance component MDM12</fullName>
    </alternativeName>
</protein>
<gene>
    <name evidence="1" type="primary">MDM12</name>
    <name type="ORF">MGG_08869</name>
</gene>
<accession>A4RM00</accession>
<accession>G4MV73</accession>
<keyword id="KW-0256">Endoplasmic reticulum</keyword>
<keyword id="KW-0445">Lipid transport</keyword>
<keyword id="KW-0446">Lipid-binding</keyword>
<keyword id="KW-0472">Membrane</keyword>
<keyword id="KW-0496">Mitochondrion</keyword>
<keyword id="KW-1000">Mitochondrion outer membrane</keyword>
<keyword id="KW-1185">Reference proteome</keyword>
<keyword id="KW-0813">Transport</keyword>
<evidence type="ECO:0000255" key="1">
    <source>
        <dbReference type="HAMAP-Rule" id="MF_03104"/>
    </source>
</evidence>
<evidence type="ECO:0000256" key="2">
    <source>
        <dbReference type="SAM" id="MobiDB-lite"/>
    </source>
</evidence>
<organism>
    <name type="scientific">Pyricularia oryzae (strain 70-15 / ATCC MYA-4617 / FGSC 8958)</name>
    <name type="common">Rice blast fungus</name>
    <name type="synonym">Magnaporthe oryzae</name>
    <dbReference type="NCBI Taxonomy" id="242507"/>
    <lineage>
        <taxon>Eukaryota</taxon>
        <taxon>Fungi</taxon>
        <taxon>Dikarya</taxon>
        <taxon>Ascomycota</taxon>
        <taxon>Pezizomycotina</taxon>
        <taxon>Sordariomycetes</taxon>
        <taxon>Sordariomycetidae</taxon>
        <taxon>Magnaporthales</taxon>
        <taxon>Pyriculariaceae</taxon>
        <taxon>Pyricularia</taxon>
    </lineage>
</organism>
<dbReference type="EMBL" id="CM001232">
    <property type="protein sequence ID" value="EHA54088.1"/>
    <property type="molecule type" value="Genomic_DNA"/>
</dbReference>
<dbReference type="RefSeq" id="XP_003713895.1">
    <property type="nucleotide sequence ID" value="XM_003713847.1"/>
</dbReference>
<dbReference type="FunCoup" id="A4RM00">
    <property type="interactions" value="47"/>
</dbReference>
<dbReference type="STRING" id="242507.A4RM00"/>
<dbReference type="EnsemblFungi" id="MGG_08869T0">
    <property type="protein sequence ID" value="MGG_08869T0"/>
    <property type="gene ID" value="MGG_08869"/>
</dbReference>
<dbReference type="GeneID" id="2679855"/>
<dbReference type="KEGG" id="mgr:MGG_08869"/>
<dbReference type="VEuPathDB" id="FungiDB:MGG_08869"/>
<dbReference type="eggNOG" id="ENOG502S3PB">
    <property type="taxonomic scope" value="Eukaryota"/>
</dbReference>
<dbReference type="HOGENOM" id="CLU_026794_0_0_1"/>
<dbReference type="InParanoid" id="A4RM00"/>
<dbReference type="OMA" id="KRAHFCF"/>
<dbReference type="OrthoDB" id="3356905at2759"/>
<dbReference type="Proteomes" id="UP000009058">
    <property type="component" value="Chromosome 2"/>
</dbReference>
<dbReference type="GO" id="GO:0005789">
    <property type="term" value="C:endoplasmic reticulum membrane"/>
    <property type="evidence" value="ECO:0007669"/>
    <property type="project" value="UniProtKB-SubCell"/>
</dbReference>
<dbReference type="GO" id="GO:0032865">
    <property type="term" value="C:ERMES complex"/>
    <property type="evidence" value="ECO:0007669"/>
    <property type="project" value="UniProtKB-UniRule"/>
</dbReference>
<dbReference type="GO" id="GO:0008289">
    <property type="term" value="F:lipid binding"/>
    <property type="evidence" value="ECO:0007669"/>
    <property type="project" value="UniProtKB-KW"/>
</dbReference>
<dbReference type="GO" id="GO:0000002">
    <property type="term" value="P:mitochondrial genome maintenance"/>
    <property type="evidence" value="ECO:0007669"/>
    <property type="project" value="UniProtKB-UniRule"/>
</dbReference>
<dbReference type="GO" id="GO:1990456">
    <property type="term" value="P:mitochondrion-endoplasmic reticulum membrane tethering"/>
    <property type="evidence" value="ECO:0007669"/>
    <property type="project" value="TreeGrafter"/>
</dbReference>
<dbReference type="GO" id="GO:0015914">
    <property type="term" value="P:phospholipid transport"/>
    <property type="evidence" value="ECO:0007669"/>
    <property type="project" value="TreeGrafter"/>
</dbReference>
<dbReference type="GO" id="GO:0045040">
    <property type="term" value="P:protein insertion into mitochondrial outer membrane"/>
    <property type="evidence" value="ECO:0007669"/>
    <property type="project" value="UniProtKB-UniRule"/>
</dbReference>
<dbReference type="CDD" id="cd21672">
    <property type="entry name" value="SMP_Mdm12"/>
    <property type="match status" value="1"/>
</dbReference>
<dbReference type="HAMAP" id="MF_03104">
    <property type="entry name" value="Mdm12"/>
    <property type="match status" value="1"/>
</dbReference>
<dbReference type="InterPro" id="IPR027532">
    <property type="entry name" value="Mdm12"/>
</dbReference>
<dbReference type="InterPro" id="IPR019411">
    <property type="entry name" value="MMM1_dom"/>
</dbReference>
<dbReference type="InterPro" id="IPR031468">
    <property type="entry name" value="SMP_LBD"/>
</dbReference>
<dbReference type="PANTHER" id="PTHR28204">
    <property type="entry name" value="MITOCHONDRIAL DISTRIBUTION AND MORPHOLOGY PROTEIN 12"/>
    <property type="match status" value="1"/>
</dbReference>
<dbReference type="PANTHER" id="PTHR28204:SF1">
    <property type="entry name" value="MITOCHONDRIAL DISTRIBUTION AND MORPHOLOGY PROTEIN 12"/>
    <property type="match status" value="1"/>
</dbReference>
<dbReference type="Pfam" id="PF10296">
    <property type="entry name" value="MMM1"/>
    <property type="match status" value="1"/>
</dbReference>
<dbReference type="PROSITE" id="PS51847">
    <property type="entry name" value="SMP"/>
    <property type="match status" value="1"/>
</dbReference>
<sequence>MSIELNWETLTTGPDGEELAHRIRDFIHSKFQTVPLPRFIKSVTVHDFQFGAIPPELELKDITDPLPDFYEEDPDVDYDDEDEDVEETHDYEERRSEAAASPARSGDDGLFGGQRGDGMNKLDRVASSSSSSVGRGSAPRPGAPPQTPTKSNININTRMRGEVPPQDLTSPFLGVSTPGILSGGTSNFSYFHSHLASSGLSGTQTPLAAVAGAQLGGPPQWNGLRSTGRGSGRRRSLAAASQGLDGEGFTPSHSRTSSTVSNADLQTASLGGFGGHLTPTSFLRSGQQTLREKHSVSTLAPTSVGTSRPPTRDLTTTMSTAQEDGQGGDGNCESSSAAAAGNEQNESDSSDRTKYRERRIEDMQAVFRIKYAGDVKLLLTADILLDYPMPSFVGIPVRLSITGLTFDGVGVVAHIRKRVHFCFLSPEDALAAVGSASGKEAGDGDEYGDTSGGAAAAAASSSASAATTPQGVATLASPAGAAPGSDEKAGGNTRMGGLLQEIRVESEIGQREGGKQSLKNVGKVEKFILEQVRRIFEEEFVYPSFWTFLV</sequence>
<feature type="chain" id="PRO_0000384292" description="Mitochondrial distribution and morphology protein 12">
    <location>
        <begin position="1"/>
        <end position="550"/>
    </location>
</feature>
<feature type="domain" description="SMP-LTD" evidence="1">
    <location>
        <begin position="1"/>
        <end position="550"/>
    </location>
</feature>
<feature type="region of interest" description="Disordered" evidence="2">
    <location>
        <begin position="62"/>
        <end position="168"/>
    </location>
</feature>
<feature type="region of interest" description="Disordered" evidence="2">
    <location>
        <begin position="218"/>
        <end position="356"/>
    </location>
</feature>
<feature type="region of interest" description="Disordered" evidence="2">
    <location>
        <begin position="474"/>
        <end position="493"/>
    </location>
</feature>
<feature type="compositionally biased region" description="Acidic residues" evidence="2">
    <location>
        <begin position="69"/>
        <end position="90"/>
    </location>
</feature>
<feature type="compositionally biased region" description="Low complexity" evidence="2">
    <location>
        <begin position="125"/>
        <end position="140"/>
    </location>
</feature>
<feature type="compositionally biased region" description="Polar residues" evidence="2">
    <location>
        <begin position="148"/>
        <end position="157"/>
    </location>
</feature>
<feature type="compositionally biased region" description="Polar residues" evidence="2">
    <location>
        <begin position="251"/>
        <end position="269"/>
    </location>
</feature>
<feature type="compositionally biased region" description="Polar residues" evidence="2">
    <location>
        <begin position="278"/>
        <end position="289"/>
    </location>
</feature>
<feature type="compositionally biased region" description="Polar residues" evidence="2">
    <location>
        <begin position="296"/>
        <end position="323"/>
    </location>
</feature>
<name>MDM12_PYRO7</name>
<comment type="function">
    <text evidence="1">Component of the ERMES/MDM complex, which serves as a molecular tether to connect the endoplasmic reticulum (ER) and mitochondria. Components of this complex are involved in the control of mitochondrial shape and protein biogenesis, and function in nonvesicular lipid trafficking between the ER and mitochondria. MDM12 is required for the interaction of the ER-resident membrane protein MMM1 and the outer mitochondrial membrane-resident beta-barrel protein MDM10. The MDM12-MMM1 subcomplex functions in the major beta-barrel assembly pathway that is responsible for biogenesis of all mitochondrial outer membrane beta-barrel proteins, and acts in a late step after the SAM complex. The MDM10-MDM12-MMM1 subcomplex further acts in the TOM40-specific pathway after the action of the MDM12-MMM1 complex. Essential for establishing and maintaining the structure of mitochondria and maintenance of mtDNA nucleoids.</text>
</comment>
<comment type="subunit">
    <text evidence="1">Component of the ER-mitochondria encounter structure (ERMES) or MDM complex, composed of MMM1, MDM10, MDM12 and MDM34. A MMM1 homodimer associates with one molecule of MDM12 on each side in a pairwise head-to-tail manner, and the SMP-LTD domains of MMM1 and MDM12 generate a continuous hydrophobic tunnel for phospholipid trafficking.</text>
</comment>
<comment type="subcellular location">
    <subcellularLocation>
        <location evidence="1">Mitochondrion outer membrane</location>
        <topology evidence="1">Peripheral membrane protein</topology>
        <orientation evidence="1">Cytoplasmic side</orientation>
    </subcellularLocation>
    <subcellularLocation>
        <location evidence="1">Endoplasmic reticulum membrane</location>
        <topology evidence="1">Peripheral membrane protein</topology>
        <orientation evidence="1">Cytoplasmic side</orientation>
    </subcellularLocation>
    <text evidence="1">The ERMES/MDM complex localizes to a few discrete foci (around 10 per single cell), that represent mitochondria-endoplasmic reticulum junctions. These foci are often found next to mtDNA nucleoids.</text>
</comment>
<comment type="domain">
    <text evidence="1">The SMP-LTD domain is a barrel-like domain that can bind various types of glycerophospholipids in its interior and mediate their transfer between two adjacent bilayers.</text>
</comment>
<comment type="similarity">
    <text evidence="1">Belongs to the MDM12 family.</text>
</comment>
<proteinExistence type="inferred from homology"/>